<feature type="chain" id="PRO_0000079382" description="Mitotic interactor and substrate of PLK1">
    <location>
        <begin position="1"/>
        <end position="648"/>
    </location>
</feature>
<feature type="region of interest" description="Disordered" evidence="4">
    <location>
        <begin position="242"/>
        <end position="383"/>
    </location>
</feature>
<feature type="region of interest" description="Disordered" evidence="4">
    <location>
        <begin position="430"/>
        <end position="460"/>
    </location>
</feature>
<feature type="region of interest" description="Disordered" evidence="4">
    <location>
        <begin position="539"/>
        <end position="568"/>
    </location>
</feature>
<feature type="coiled-coil region" evidence="3">
    <location>
        <begin position="511"/>
        <end position="534"/>
    </location>
</feature>
<feature type="compositionally biased region" description="Basic and acidic residues" evidence="4">
    <location>
        <begin position="255"/>
        <end position="281"/>
    </location>
</feature>
<feature type="compositionally biased region" description="Basic and acidic residues" evidence="4">
    <location>
        <begin position="325"/>
        <end position="339"/>
    </location>
</feature>
<feature type="compositionally biased region" description="Polar residues" evidence="4">
    <location>
        <begin position="349"/>
        <end position="367"/>
    </location>
</feature>
<feature type="compositionally biased region" description="Polar residues" evidence="4">
    <location>
        <begin position="440"/>
        <end position="450"/>
    </location>
</feature>
<feature type="compositionally biased region" description="Polar residues" evidence="4">
    <location>
        <begin position="557"/>
        <end position="568"/>
    </location>
</feature>
<feature type="modified residue" description="Phosphoserine; by CDK1" evidence="2">
    <location>
        <position position="77"/>
    </location>
</feature>
<feature type="modified residue" description="Phosphothreonine" evidence="2">
    <location>
        <position position="149"/>
    </location>
</feature>
<feature type="modified residue" description="Phosphothreonine" evidence="2">
    <location>
        <position position="190"/>
    </location>
</feature>
<feature type="modified residue" description="Phosphoserine" evidence="7">
    <location>
        <position position="220"/>
    </location>
</feature>
<feature type="modified residue" description="Phosphoserine; by CDK1" evidence="2">
    <location>
        <position position="253"/>
    </location>
</feature>
<feature type="modified residue" description="Phosphothreonine; by CDK1" evidence="2">
    <location>
        <position position="256"/>
    </location>
</feature>
<feature type="modified residue" description="Phosphoserine" evidence="2">
    <location>
        <position position="318"/>
    </location>
</feature>
<feature type="modified residue" description="Phosphothreonine; by CDK1" evidence="2">
    <location>
        <position position="347"/>
    </location>
</feature>
<feature type="modified residue" description="Phosphoserine" evidence="2">
    <location>
        <position position="352"/>
    </location>
</feature>
<feature type="modified residue" description="Phosphoserine" evidence="7">
    <location>
        <position position="364"/>
    </location>
</feature>
<feature type="modified residue" description="Phosphoserine; by PLK1" evidence="2">
    <location>
        <position position="365"/>
    </location>
</feature>
<feature type="modified residue" description="Phosphoserine; by PLK1" evidence="2">
    <location>
        <position position="439"/>
    </location>
</feature>
<feature type="modified residue" description="Phosphoserine" evidence="2">
    <location>
        <position position="507"/>
    </location>
</feature>
<feature type="modified residue" description="Phosphoserine" evidence="2">
    <location>
        <position position="509"/>
    </location>
</feature>
<feature type="modified residue" description="Phosphoserine; by CDK1" evidence="2">
    <location>
        <position position="541"/>
    </location>
</feature>
<feature type="modified residue" description="Phosphoserine; by PLK1" evidence="2">
    <location>
        <position position="554"/>
    </location>
</feature>
<feature type="modified residue" description="Phosphoserine" evidence="2">
    <location>
        <position position="644"/>
    </location>
</feature>
<proteinExistence type="evidence at protein level"/>
<keyword id="KW-0009">Actin-binding</keyword>
<keyword id="KW-0131">Cell cycle</keyword>
<keyword id="KW-0132">Cell division</keyword>
<keyword id="KW-0965">Cell junction</keyword>
<keyword id="KW-0175">Coiled coil</keyword>
<keyword id="KW-0963">Cytoplasm</keyword>
<keyword id="KW-0206">Cytoskeleton</keyword>
<keyword id="KW-0498">Mitosis</keyword>
<keyword id="KW-0597">Phosphoprotein</keyword>
<keyword id="KW-1185">Reference proteome</keyword>
<evidence type="ECO:0000250" key="1"/>
<evidence type="ECO:0000250" key="2">
    <source>
        <dbReference type="UniProtKB" id="Q8IVT2"/>
    </source>
</evidence>
<evidence type="ECO:0000255" key="3"/>
<evidence type="ECO:0000256" key="4">
    <source>
        <dbReference type="SAM" id="MobiDB-lite"/>
    </source>
</evidence>
<evidence type="ECO:0000305" key="5"/>
<evidence type="ECO:0000312" key="6">
    <source>
        <dbReference type="MGI" id="MGI:1926156"/>
    </source>
</evidence>
<evidence type="ECO:0007744" key="7">
    <source>
    </source>
</evidence>
<sequence length="648" mass="72281">MDRVTRYPIFSNPRSARVTSLVLDEDTSYTVELVGVGPEAGWSQGDLQAWSTEYQTRPDVKRTNVSSNRRVFLGQQSPRSLYLEDEDEEIKSYHLDDSSDTLCRQRRELEAERWAVIQSQAVRKGGTVATLQAASDHGDLRIARQPQSTVTEEILVDTEQIDFLAARQQFLSLEKANTNPVPCGLTARETFPRTPPGINQAPKASTGPHLANGYTTAVTSPMKEVTLEKSFHVSPARSIHIVNDPGSQTQAESPETPKETPIEREIRLAQEREAELREQRGLGRAAGHQELVQIPSRPLLSKMSLTETPPRRDRGRPSLYVQRDMVQETQREEDHRREGLQVGRASTPDWPSQDPQPGLQRSLSSDCILSPDARATDPAPEARKVNRIPLDAYQPYLGPGTPKLEFSAFGVYSKPSGVSTEDTKATVFQKATESPRHVSESSGRSLSSKQEWSKPPGKATNVGVVRLGNFHLRPLRFKVPDVPQGTETPHTWGWEVAGGPILRLQKSQSSDLLEREMESVLRREREVAEERRNAFFPEVFSPVPAEDESHEQDSRSSSRASGITGSYSVSESPLFTPVHLNSGLVWKVEAPEDSAPPGQKTRKEMWYAGINPSDSVNSEVLGATRVKRHKNLLAERWEAHIYASEDEN</sequence>
<gene>
    <name evidence="6" type="primary">Misp</name>
</gene>
<comment type="function">
    <text evidence="1">Plays a role in mitotic spindle orientation and mitotic progression. Regulates the distribution of dynactin at the cell cortex in a PLK1-dependent manner, thus stabilizing cortical and astral microtubule attachments required for proper mitotic spindle positioning. May link microtubules to the actin cytoskeleton and focal adhesions. May be required for directed cell migration and centrosome orientation. May also be necessary for proper stacking of the Golgi apparatus (By similarity).</text>
</comment>
<comment type="subunit">
    <text evidence="1">Associates with F-actin. Interacts with DCTN1; this interaction regulates DCTN1 distribution at the cell cortex. Interacts with PTK2/FAK and MAPRE1 (By similarity).</text>
</comment>
<comment type="subcellular location">
    <subcellularLocation>
        <location evidence="1">Cell junction</location>
        <location evidence="1">Focal adhesion</location>
    </subcellularLocation>
    <subcellularLocation>
        <location evidence="1">Cytoplasm</location>
        <location evidence="1">Cytoskeleton</location>
    </subcellularLocation>
    <subcellularLocation>
        <location evidence="1">Cytoplasm</location>
        <location evidence="1">Cell cortex</location>
    </subcellularLocation>
    <text evidence="1">Predominantly localizes to cortical actin structures during interphase and mitosis. Present in retraction fibers, which are formed at former adhesion sites during mitosis, and at spicular membrane protrusions in re-attaching cytokinetic cells. Partially colocalizes with cytoplasmic F-actin. Not detected at microtubules at interphase, nor at spindle during mitosis (By similarity).</text>
</comment>
<comment type="PTM">
    <text evidence="1">Phosphorylated by CDK1 and PLK1. CDK1 is the priming kinase for PLK1 phosphorylation. Phosphorylation by PLK1 is required for proper spindle orientation at metaphase (By similarity).</text>
</comment>
<comment type="similarity">
    <text evidence="5">Belongs to the MISP family.</text>
</comment>
<accession>Q9D279</accession>
<accession>Q3UI04</accession>
<organism>
    <name type="scientific">Mus musculus</name>
    <name type="common">Mouse</name>
    <dbReference type="NCBI Taxonomy" id="10090"/>
    <lineage>
        <taxon>Eukaryota</taxon>
        <taxon>Metazoa</taxon>
        <taxon>Chordata</taxon>
        <taxon>Craniata</taxon>
        <taxon>Vertebrata</taxon>
        <taxon>Euteleostomi</taxon>
        <taxon>Mammalia</taxon>
        <taxon>Eutheria</taxon>
        <taxon>Euarchontoglires</taxon>
        <taxon>Glires</taxon>
        <taxon>Rodentia</taxon>
        <taxon>Myomorpha</taxon>
        <taxon>Muroidea</taxon>
        <taxon>Muridae</taxon>
        <taxon>Murinae</taxon>
        <taxon>Mus</taxon>
        <taxon>Mus</taxon>
    </lineage>
</organism>
<dbReference type="EMBL" id="AK020266">
    <property type="protein sequence ID" value="BAB32049.1"/>
    <property type="molecule type" value="mRNA"/>
</dbReference>
<dbReference type="EMBL" id="AK146817">
    <property type="protein sequence ID" value="BAE27456.1"/>
    <property type="molecule type" value="mRNA"/>
</dbReference>
<dbReference type="EMBL" id="AK147132">
    <property type="protein sequence ID" value="BAE27702.1"/>
    <property type="molecule type" value="mRNA"/>
</dbReference>
<dbReference type="EMBL" id="BC013508">
    <property type="protein sequence ID" value="AAH13508.1"/>
    <property type="molecule type" value="mRNA"/>
</dbReference>
<dbReference type="CCDS" id="CCDS23992.1"/>
<dbReference type="RefSeq" id="NP_084494.1">
    <property type="nucleotide sequence ID" value="NM_030218.2"/>
</dbReference>
<dbReference type="RefSeq" id="XP_006514391.1">
    <property type="nucleotide sequence ID" value="XM_006514328.1"/>
</dbReference>
<dbReference type="RefSeq" id="XP_006514392.1">
    <property type="nucleotide sequence ID" value="XM_006514329.1"/>
</dbReference>
<dbReference type="RefSeq" id="XP_006514393.1">
    <property type="nucleotide sequence ID" value="XM_006514330.1"/>
</dbReference>
<dbReference type="RefSeq" id="XP_006514394.1">
    <property type="nucleotide sequence ID" value="XM_006514331.1"/>
</dbReference>
<dbReference type="RefSeq" id="XP_006514395.1">
    <property type="nucleotide sequence ID" value="XM_006514332.4"/>
</dbReference>
<dbReference type="RefSeq" id="XP_006514396.1">
    <property type="nucleotide sequence ID" value="XM_006514333.5"/>
</dbReference>
<dbReference type="BioGRID" id="219696">
    <property type="interactions" value="1"/>
</dbReference>
<dbReference type="FunCoup" id="Q9D279">
    <property type="interactions" value="27"/>
</dbReference>
<dbReference type="STRING" id="10090.ENSMUSP00000151529"/>
<dbReference type="iPTMnet" id="Q9D279"/>
<dbReference type="PhosphoSitePlus" id="Q9D279"/>
<dbReference type="PaxDb" id="10090-ENSMUSP00000130071"/>
<dbReference type="PeptideAtlas" id="Q9D279"/>
<dbReference type="ProteomicsDB" id="295568"/>
<dbReference type="Antibodypedia" id="22380">
    <property type="antibodies" value="116 antibodies from 21 providers"/>
</dbReference>
<dbReference type="DNASU" id="78906"/>
<dbReference type="Ensembl" id="ENSMUST00000046833.5">
    <property type="protein sequence ID" value="ENSMUSP00000048893.5"/>
    <property type="gene ID" value="ENSMUSG00000035852.12"/>
</dbReference>
<dbReference type="Ensembl" id="ENSMUST00000169041.9">
    <property type="protein sequence ID" value="ENSMUSP00000130071.2"/>
    <property type="gene ID" value="ENSMUSG00000035852.12"/>
</dbReference>
<dbReference type="Ensembl" id="ENSMUST00000219305.2">
    <property type="protein sequence ID" value="ENSMUSP00000151529.2"/>
    <property type="gene ID" value="ENSMUSG00000035852.12"/>
</dbReference>
<dbReference type="GeneID" id="78906"/>
<dbReference type="KEGG" id="mmu:78906"/>
<dbReference type="UCSC" id="uc007fzy.1">
    <property type="organism name" value="mouse"/>
</dbReference>
<dbReference type="AGR" id="MGI:1926156"/>
<dbReference type="CTD" id="126353"/>
<dbReference type="MGI" id="MGI:1926156">
    <property type="gene designation" value="Misp"/>
</dbReference>
<dbReference type="VEuPathDB" id="HostDB:ENSMUSG00000035852"/>
<dbReference type="eggNOG" id="ENOG502RZZI">
    <property type="taxonomic scope" value="Eukaryota"/>
</dbReference>
<dbReference type="GeneTree" id="ENSGT00940000154739"/>
<dbReference type="HOGENOM" id="CLU_404873_0_0_1"/>
<dbReference type="InParanoid" id="Q9D279"/>
<dbReference type="OMA" id="QASHRHD"/>
<dbReference type="OrthoDB" id="9449914at2759"/>
<dbReference type="PhylomeDB" id="Q9D279"/>
<dbReference type="TreeFam" id="TF334067"/>
<dbReference type="BioGRID-ORCS" id="78906">
    <property type="hits" value="4 hits in 78 CRISPR screens"/>
</dbReference>
<dbReference type="PRO" id="PR:Q9D279"/>
<dbReference type="Proteomes" id="UP000000589">
    <property type="component" value="Chromosome 10"/>
</dbReference>
<dbReference type="RNAct" id="Q9D279">
    <property type="molecule type" value="protein"/>
</dbReference>
<dbReference type="Bgee" id="ENSMUSG00000035852">
    <property type="expression patterns" value="Expressed in intestinal villus and 128 other cell types or tissues"/>
</dbReference>
<dbReference type="ExpressionAtlas" id="Q9D279">
    <property type="expression patterns" value="baseline and differential"/>
</dbReference>
<dbReference type="GO" id="GO:0005884">
    <property type="term" value="C:actin filament"/>
    <property type="evidence" value="ECO:0000250"/>
    <property type="project" value="UniProtKB"/>
</dbReference>
<dbReference type="GO" id="GO:0030864">
    <property type="term" value="C:cortical actin cytoskeleton"/>
    <property type="evidence" value="ECO:0007669"/>
    <property type="project" value="Ensembl"/>
</dbReference>
<dbReference type="GO" id="GO:0005925">
    <property type="term" value="C:focal adhesion"/>
    <property type="evidence" value="ECO:0007669"/>
    <property type="project" value="UniProtKB-SubCell"/>
</dbReference>
<dbReference type="GO" id="GO:0043231">
    <property type="term" value="C:intracellular membrane-bounded organelle"/>
    <property type="evidence" value="ECO:0007669"/>
    <property type="project" value="Ensembl"/>
</dbReference>
<dbReference type="GO" id="GO:1905721">
    <property type="term" value="C:mitotic spindle astral microtubule end"/>
    <property type="evidence" value="ECO:0007669"/>
    <property type="project" value="Ensembl"/>
</dbReference>
<dbReference type="GO" id="GO:0005886">
    <property type="term" value="C:plasma membrane"/>
    <property type="evidence" value="ECO:0007669"/>
    <property type="project" value="Ensembl"/>
</dbReference>
<dbReference type="GO" id="GO:0031616">
    <property type="term" value="C:spindle pole centrosome"/>
    <property type="evidence" value="ECO:0000250"/>
    <property type="project" value="UniProtKB"/>
</dbReference>
<dbReference type="GO" id="GO:0051015">
    <property type="term" value="F:actin filament binding"/>
    <property type="evidence" value="ECO:0000250"/>
    <property type="project" value="UniProtKB"/>
</dbReference>
<dbReference type="GO" id="GO:0051301">
    <property type="term" value="P:cell division"/>
    <property type="evidence" value="ECO:0007669"/>
    <property type="project" value="UniProtKB-KW"/>
</dbReference>
<dbReference type="GO" id="GO:0016477">
    <property type="term" value="P:cell migration"/>
    <property type="evidence" value="ECO:0000250"/>
    <property type="project" value="UniProtKB"/>
</dbReference>
<dbReference type="GO" id="GO:0051660">
    <property type="term" value="P:establishment of centrosome localization"/>
    <property type="evidence" value="ECO:0000250"/>
    <property type="project" value="UniProtKB"/>
</dbReference>
<dbReference type="GO" id="GO:0000132">
    <property type="term" value="P:establishment of mitotic spindle orientation"/>
    <property type="evidence" value="ECO:0000250"/>
    <property type="project" value="UniProtKB"/>
</dbReference>
<dbReference type="GO" id="GO:0090307">
    <property type="term" value="P:mitotic spindle assembly"/>
    <property type="evidence" value="ECO:0000250"/>
    <property type="project" value="UniProtKB"/>
</dbReference>
<dbReference type="GO" id="GO:0051640">
    <property type="term" value="P:organelle localization"/>
    <property type="evidence" value="ECO:0000250"/>
    <property type="project" value="UniProtKB"/>
</dbReference>
<dbReference type="GO" id="GO:1904776">
    <property type="term" value="P:regulation of protein localization to cell cortex"/>
    <property type="evidence" value="ECO:0000250"/>
    <property type="project" value="UniProtKB"/>
</dbReference>
<dbReference type="InterPro" id="IPR029304">
    <property type="entry name" value="AKAP2_C"/>
</dbReference>
<dbReference type="InterPro" id="IPR042779">
    <property type="entry name" value="MISP/MISP3-like"/>
</dbReference>
<dbReference type="PANTHER" id="PTHR18839:SF3">
    <property type="entry name" value="MITOTIC INTERACTOR AND SUBSTRATE OF PLK1"/>
    <property type="match status" value="1"/>
</dbReference>
<dbReference type="PANTHER" id="PTHR18839">
    <property type="entry name" value="MITOTIC INTERACTOR AND SUBSTRATE OF PLK1 MISP FAMILY MEMBER"/>
    <property type="match status" value="1"/>
</dbReference>
<dbReference type="Pfam" id="PF15304">
    <property type="entry name" value="AKAP2_C"/>
    <property type="match status" value="1"/>
</dbReference>
<reference key="1">
    <citation type="journal article" date="2005" name="Science">
        <title>The transcriptional landscape of the mammalian genome.</title>
        <authorList>
            <person name="Carninci P."/>
            <person name="Kasukawa T."/>
            <person name="Katayama S."/>
            <person name="Gough J."/>
            <person name="Frith M.C."/>
            <person name="Maeda N."/>
            <person name="Oyama R."/>
            <person name="Ravasi T."/>
            <person name="Lenhard B."/>
            <person name="Wells C."/>
            <person name="Kodzius R."/>
            <person name="Shimokawa K."/>
            <person name="Bajic V.B."/>
            <person name="Brenner S.E."/>
            <person name="Batalov S."/>
            <person name="Forrest A.R."/>
            <person name="Zavolan M."/>
            <person name="Davis M.J."/>
            <person name="Wilming L.G."/>
            <person name="Aidinis V."/>
            <person name="Allen J.E."/>
            <person name="Ambesi-Impiombato A."/>
            <person name="Apweiler R."/>
            <person name="Aturaliya R.N."/>
            <person name="Bailey T.L."/>
            <person name="Bansal M."/>
            <person name="Baxter L."/>
            <person name="Beisel K.W."/>
            <person name="Bersano T."/>
            <person name="Bono H."/>
            <person name="Chalk A.M."/>
            <person name="Chiu K.P."/>
            <person name="Choudhary V."/>
            <person name="Christoffels A."/>
            <person name="Clutterbuck D.R."/>
            <person name="Crowe M.L."/>
            <person name="Dalla E."/>
            <person name="Dalrymple B.P."/>
            <person name="de Bono B."/>
            <person name="Della Gatta G."/>
            <person name="di Bernardo D."/>
            <person name="Down T."/>
            <person name="Engstrom P."/>
            <person name="Fagiolini M."/>
            <person name="Faulkner G."/>
            <person name="Fletcher C.F."/>
            <person name="Fukushima T."/>
            <person name="Furuno M."/>
            <person name="Futaki S."/>
            <person name="Gariboldi M."/>
            <person name="Georgii-Hemming P."/>
            <person name="Gingeras T.R."/>
            <person name="Gojobori T."/>
            <person name="Green R.E."/>
            <person name="Gustincich S."/>
            <person name="Harbers M."/>
            <person name="Hayashi Y."/>
            <person name="Hensch T.K."/>
            <person name="Hirokawa N."/>
            <person name="Hill D."/>
            <person name="Huminiecki L."/>
            <person name="Iacono M."/>
            <person name="Ikeo K."/>
            <person name="Iwama A."/>
            <person name="Ishikawa T."/>
            <person name="Jakt M."/>
            <person name="Kanapin A."/>
            <person name="Katoh M."/>
            <person name="Kawasawa Y."/>
            <person name="Kelso J."/>
            <person name="Kitamura H."/>
            <person name="Kitano H."/>
            <person name="Kollias G."/>
            <person name="Krishnan S.P."/>
            <person name="Kruger A."/>
            <person name="Kummerfeld S.K."/>
            <person name="Kurochkin I.V."/>
            <person name="Lareau L.F."/>
            <person name="Lazarevic D."/>
            <person name="Lipovich L."/>
            <person name="Liu J."/>
            <person name="Liuni S."/>
            <person name="McWilliam S."/>
            <person name="Madan Babu M."/>
            <person name="Madera M."/>
            <person name="Marchionni L."/>
            <person name="Matsuda H."/>
            <person name="Matsuzawa S."/>
            <person name="Miki H."/>
            <person name="Mignone F."/>
            <person name="Miyake S."/>
            <person name="Morris K."/>
            <person name="Mottagui-Tabar S."/>
            <person name="Mulder N."/>
            <person name="Nakano N."/>
            <person name="Nakauchi H."/>
            <person name="Ng P."/>
            <person name="Nilsson R."/>
            <person name="Nishiguchi S."/>
            <person name="Nishikawa S."/>
            <person name="Nori F."/>
            <person name="Ohara O."/>
            <person name="Okazaki Y."/>
            <person name="Orlando V."/>
            <person name="Pang K.C."/>
            <person name="Pavan W.J."/>
            <person name="Pavesi G."/>
            <person name="Pesole G."/>
            <person name="Petrovsky N."/>
            <person name="Piazza S."/>
            <person name="Reed J."/>
            <person name="Reid J.F."/>
            <person name="Ring B.Z."/>
            <person name="Ringwald M."/>
            <person name="Rost B."/>
            <person name="Ruan Y."/>
            <person name="Salzberg S.L."/>
            <person name="Sandelin A."/>
            <person name="Schneider C."/>
            <person name="Schoenbach C."/>
            <person name="Sekiguchi K."/>
            <person name="Semple C.A."/>
            <person name="Seno S."/>
            <person name="Sessa L."/>
            <person name="Sheng Y."/>
            <person name="Shibata Y."/>
            <person name="Shimada H."/>
            <person name="Shimada K."/>
            <person name="Silva D."/>
            <person name="Sinclair B."/>
            <person name="Sperling S."/>
            <person name="Stupka E."/>
            <person name="Sugiura K."/>
            <person name="Sultana R."/>
            <person name="Takenaka Y."/>
            <person name="Taki K."/>
            <person name="Tammoja K."/>
            <person name="Tan S.L."/>
            <person name="Tang S."/>
            <person name="Taylor M.S."/>
            <person name="Tegner J."/>
            <person name="Teichmann S.A."/>
            <person name="Ueda H.R."/>
            <person name="van Nimwegen E."/>
            <person name="Verardo R."/>
            <person name="Wei C.L."/>
            <person name="Yagi K."/>
            <person name="Yamanishi H."/>
            <person name="Zabarovsky E."/>
            <person name="Zhu S."/>
            <person name="Zimmer A."/>
            <person name="Hide W."/>
            <person name="Bult C."/>
            <person name="Grimmond S.M."/>
            <person name="Teasdale R.D."/>
            <person name="Liu E.T."/>
            <person name="Brusic V."/>
            <person name="Quackenbush J."/>
            <person name="Wahlestedt C."/>
            <person name="Mattick J.S."/>
            <person name="Hume D.A."/>
            <person name="Kai C."/>
            <person name="Sasaki D."/>
            <person name="Tomaru Y."/>
            <person name="Fukuda S."/>
            <person name="Kanamori-Katayama M."/>
            <person name="Suzuki M."/>
            <person name="Aoki J."/>
            <person name="Arakawa T."/>
            <person name="Iida J."/>
            <person name="Imamura K."/>
            <person name="Itoh M."/>
            <person name="Kato T."/>
            <person name="Kawaji H."/>
            <person name="Kawagashira N."/>
            <person name="Kawashima T."/>
            <person name="Kojima M."/>
            <person name="Kondo S."/>
            <person name="Konno H."/>
            <person name="Nakano K."/>
            <person name="Ninomiya N."/>
            <person name="Nishio T."/>
            <person name="Okada M."/>
            <person name="Plessy C."/>
            <person name="Shibata K."/>
            <person name="Shiraki T."/>
            <person name="Suzuki S."/>
            <person name="Tagami M."/>
            <person name="Waki K."/>
            <person name="Watahiki A."/>
            <person name="Okamura-Oho Y."/>
            <person name="Suzuki H."/>
            <person name="Kawai J."/>
            <person name="Hayashizaki Y."/>
        </authorList>
    </citation>
    <scope>NUCLEOTIDE SEQUENCE [LARGE SCALE MRNA]</scope>
</reference>
<reference key="2">
    <citation type="journal article" date="2004" name="Genome Res.">
        <title>The status, quality, and expansion of the NIH full-length cDNA project: the Mammalian Gene Collection (MGC).</title>
        <authorList>
            <consortium name="The MGC Project Team"/>
        </authorList>
    </citation>
    <scope>NUCLEOTIDE SEQUENCE [LARGE SCALE MRNA]</scope>
    <source>
        <strain>FVB/N</strain>
        <tissue>Colon</tissue>
    </source>
</reference>
<reference key="3">
    <citation type="journal article" date="2010" name="Cell">
        <title>A tissue-specific atlas of mouse protein phosphorylation and expression.</title>
        <authorList>
            <person name="Huttlin E.L."/>
            <person name="Jedrychowski M.P."/>
            <person name="Elias J.E."/>
            <person name="Goswami T."/>
            <person name="Rad R."/>
            <person name="Beausoleil S.A."/>
            <person name="Villen J."/>
            <person name="Haas W."/>
            <person name="Sowa M.E."/>
            <person name="Gygi S.P."/>
        </authorList>
    </citation>
    <scope>PHOSPHORYLATION [LARGE SCALE ANALYSIS] AT SER-220 AND SER-364</scope>
    <scope>IDENTIFICATION BY MASS SPECTROMETRY [LARGE SCALE ANALYSIS]</scope>
    <source>
        <tissue>Kidney</tissue>
        <tissue>Lung</tissue>
        <tissue>Pancreas</tissue>
    </source>
</reference>
<protein>
    <recommendedName>
        <fullName evidence="2">Mitotic interactor and substrate of PLK1</fullName>
    </recommendedName>
    <alternativeName>
        <fullName evidence="6">Mitotic spindle positioning protein</fullName>
    </alternativeName>
</protein>
<name>MISP_MOUSE</name>